<accession>A3PRF6</accession>
<reference key="1">
    <citation type="submission" date="2007-02" db="EMBL/GenBank/DDBJ databases">
        <title>Complete sequence of chromosome 2 of Rhodobacter sphaeroides ATCC 17029.</title>
        <authorList>
            <person name="Copeland A."/>
            <person name="Lucas S."/>
            <person name="Lapidus A."/>
            <person name="Barry K."/>
            <person name="Detter J.C."/>
            <person name="Glavina del Rio T."/>
            <person name="Hammon N."/>
            <person name="Israni S."/>
            <person name="Dalin E."/>
            <person name="Tice H."/>
            <person name="Pitluck S."/>
            <person name="Kiss H."/>
            <person name="Brettin T."/>
            <person name="Bruce D."/>
            <person name="Han C."/>
            <person name="Tapia R."/>
            <person name="Gilna P."/>
            <person name="Schmutz J."/>
            <person name="Larimer F."/>
            <person name="Land M."/>
            <person name="Hauser L."/>
            <person name="Kyrpides N."/>
            <person name="Mikhailova N."/>
            <person name="Richardson P."/>
            <person name="Mackenzie C."/>
            <person name="Choudhary M."/>
            <person name="Donohue T.J."/>
            <person name="Kaplan S."/>
        </authorList>
    </citation>
    <scope>NUCLEOTIDE SEQUENCE [LARGE SCALE GENOMIC DNA]</scope>
    <source>
        <strain>ATCC 17029 / ATH 2.4.9</strain>
    </source>
</reference>
<evidence type="ECO:0000255" key="1">
    <source>
        <dbReference type="HAMAP-Rule" id="MF_01202"/>
    </source>
</evidence>
<organism>
    <name type="scientific">Cereibacter sphaeroides (strain ATCC 17029 / ATH 2.4.9)</name>
    <name type="common">Rhodobacter sphaeroides</name>
    <dbReference type="NCBI Taxonomy" id="349101"/>
    <lineage>
        <taxon>Bacteria</taxon>
        <taxon>Pseudomonadati</taxon>
        <taxon>Pseudomonadota</taxon>
        <taxon>Alphaproteobacteria</taxon>
        <taxon>Rhodobacterales</taxon>
        <taxon>Paracoccaceae</taxon>
        <taxon>Cereibacter</taxon>
    </lineage>
</organism>
<name>DADA_CERS1</name>
<feature type="chain" id="PRO_1000066111" description="D-amino acid dehydrogenase">
    <location>
        <begin position="1"/>
        <end position="436"/>
    </location>
</feature>
<feature type="binding site" evidence="1">
    <location>
        <begin position="3"/>
        <end position="17"/>
    </location>
    <ligand>
        <name>FAD</name>
        <dbReference type="ChEBI" id="CHEBI:57692"/>
    </ligand>
</feature>
<protein>
    <recommendedName>
        <fullName evidence="1">D-amino acid dehydrogenase</fullName>
        <ecNumber evidence="1">1.4.99.-</ecNumber>
    </recommendedName>
</protein>
<gene>
    <name evidence="1" type="primary">dadA</name>
    <name type="ordered locus">Rsph17029_3842</name>
</gene>
<dbReference type="EC" id="1.4.99.-" evidence="1"/>
<dbReference type="EMBL" id="CP000578">
    <property type="protein sequence ID" value="ABN78922.1"/>
    <property type="molecule type" value="Genomic_DNA"/>
</dbReference>
<dbReference type="RefSeq" id="WP_011842694.1">
    <property type="nucleotide sequence ID" value="NC_009050.1"/>
</dbReference>
<dbReference type="SMR" id="A3PRF6"/>
<dbReference type="KEGG" id="rsh:Rsph17029_3842"/>
<dbReference type="HOGENOM" id="CLU_007884_9_2_5"/>
<dbReference type="UniPathway" id="UPA00043">
    <property type="reaction ID" value="UER00498"/>
</dbReference>
<dbReference type="GO" id="GO:0005737">
    <property type="term" value="C:cytoplasm"/>
    <property type="evidence" value="ECO:0007669"/>
    <property type="project" value="TreeGrafter"/>
</dbReference>
<dbReference type="GO" id="GO:0005886">
    <property type="term" value="C:plasma membrane"/>
    <property type="evidence" value="ECO:0007669"/>
    <property type="project" value="TreeGrafter"/>
</dbReference>
<dbReference type="GO" id="GO:0008718">
    <property type="term" value="F:D-amino-acid dehydrogenase activity"/>
    <property type="evidence" value="ECO:0007669"/>
    <property type="project" value="UniProtKB-UniRule"/>
</dbReference>
<dbReference type="GO" id="GO:0055130">
    <property type="term" value="P:D-alanine catabolic process"/>
    <property type="evidence" value="ECO:0007669"/>
    <property type="project" value="UniProtKB-UniPathway"/>
</dbReference>
<dbReference type="FunFam" id="3.50.50.60:FF:000020">
    <property type="entry name" value="D-amino acid dehydrogenase"/>
    <property type="match status" value="1"/>
</dbReference>
<dbReference type="Gene3D" id="3.30.9.10">
    <property type="entry name" value="D-Amino Acid Oxidase, subunit A, domain 2"/>
    <property type="match status" value="1"/>
</dbReference>
<dbReference type="Gene3D" id="3.50.50.60">
    <property type="entry name" value="FAD/NAD(P)-binding domain"/>
    <property type="match status" value="2"/>
</dbReference>
<dbReference type="HAMAP" id="MF_01202">
    <property type="entry name" value="DadA"/>
    <property type="match status" value="1"/>
</dbReference>
<dbReference type="InterPro" id="IPR023080">
    <property type="entry name" value="DadA"/>
</dbReference>
<dbReference type="InterPro" id="IPR006076">
    <property type="entry name" value="FAD-dep_OxRdtase"/>
</dbReference>
<dbReference type="InterPro" id="IPR036188">
    <property type="entry name" value="FAD/NAD-bd_sf"/>
</dbReference>
<dbReference type="NCBIfam" id="NF001933">
    <property type="entry name" value="PRK00711.1"/>
    <property type="match status" value="1"/>
</dbReference>
<dbReference type="PANTHER" id="PTHR13847:SF280">
    <property type="entry name" value="D-AMINO ACID DEHYDROGENASE"/>
    <property type="match status" value="1"/>
</dbReference>
<dbReference type="PANTHER" id="PTHR13847">
    <property type="entry name" value="SARCOSINE DEHYDROGENASE-RELATED"/>
    <property type="match status" value="1"/>
</dbReference>
<dbReference type="Pfam" id="PF01266">
    <property type="entry name" value="DAO"/>
    <property type="match status" value="1"/>
</dbReference>
<dbReference type="SUPFAM" id="SSF54373">
    <property type="entry name" value="FAD-linked reductases, C-terminal domain"/>
    <property type="match status" value="1"/>
</dbReference>
<dbReference type="SUPFAM" id="SSF51905">
    <property type="entry name" value="FAD/NAD(P)-binding domain"/>
    <property type="match status" value="1"/>
</dbReference>
<proteinExistence type="inferred from homology"/>
<keyword id="KW-0274">FAD</keyword>
<keyword id="KW-0285">Flavoprotein</keyword>
<keyword id="KW-0560">Oxidoreductase</keyword>
<sequence length="436" mass="46277">MRIVVLGAGVVGVTSAYELARAGHEVTVVDRQPAAALETSFANAGEISPGYASPWAAPGIPAKALRWMFMKHAPLVIRPRLDAAQVRFLLAILRNCTPAAYAQNKGRMVRLAEYSRDCLTDLRATTGLAFDERQQGTLQLFRSQKQLDAAARDIEVLRAGGVPFELLDADGCLAAEPGLRAARDRIAGGLRLTGDETGDCFKFTQGLAGLAEEGGVRFRYGTGVERLRVEGGRVTGVETTKGTFLADAVVVALGSYSPALVAPLGLRLPVYPVKGYSITVPIVDAERAPVSTVMDETYKIAITRLGTRIRVGGMAEVAGFSATLPPARRETLAMSVNDLFGGAGDLSRASFWTGLRPMTPDGTPVVGRTPVAGLWLNTGHGTLGWTMAAGSARVLSDLIDGRAPEIESADLGIERYVAPDRRARPAVRLNPARQAG</sequence>
<comment type="function">
    <text evidence="1">Oxidative deamination of D-amino acids.</text>
</comment>
<comment type="catalytic activity">
    <reaction evidence="1">
        <text>a D-alpha-amino acid + A + H2O = a 2-oxocarboxylate + AH2 + NH4(+)</text>
        <dbReference type="Rhea" id="RHEA:18125"/>
        <dbReference type="ChEBI" id="CHEBI:13193"/>
        <dbReference type="ChEBI" id="CHEBI:15377"/>
        <dbReference type="ChEBI" id="CHEBI:17499"/>
        <dbReference type="ChEBI" id="CHEBI:28938"/>
        <dbReference type="ChEBI" id="CHEBI:35179"/>
        <dbReference type="ChEBI" id="CHEBI:59871"/>
    </reaction>
</comment>
<comment type="cofactor">
    <cofactor evidence="1">
        <name>FAD</name>
        <dbReference type="ChEBI" id="CHEBI:57692"/>
    </cofactor>
</comment>
<comment type="pathway">
    <text>Amino-acid degradation; D-alanine degradation; NH(3) and pyruvate from D-alanine: step 1/1.</text>
</comment>
<comment type="similarity">
    <text evidence="1">Belongs to the DadA oxidoreductase family.</text>
</comment>